<gene>
    <name type="primary">GOT2</name>
</gene>
<keyword id="KW-0007">Acetylation</keyword>
<keyword id="KW-0032">Aminotransferase</keyword>
<keyword id="KW-1003">Cell membrane</keyword>
<keyword id="KW-0445">Lipid transport</keyword>
<keyword id="KW-0472">Membrane</keyword>
<keyword id="KW-0488">Methylation</keyword>
<keyword id="KW-0496">Mitochondrion</keyword>
<keyword id="KW-0944">Nitration</keyword>
<keyword id="KW-0597">Phosphoprotein</keyword>
<keyword id="KW-0663">Pyridoxal phosphate</keyword>
<keyword id="KW-1185">Reference proteome</keyword>
<keyword id="KW-0808">Transferase</keyword>
<keyword id="KW-0809">Transit peptide</keyword>
<keyword id="KW-0813">Transport</keyword>
<name>AATM_PONAB</name>
<comment type="function">
    <text evidence="2">Catalyzes the irreversible transamination of the L-tryptophan metabolite L-kynurenine to form kynurenic acid (KA). As a member of the malate-aspartate shuttle, it has a key role in the intracellular NAD(H) redox balance. Is important for metabolite exchange between mitochondria and cytosol, and for amino acid metabolism. Facilitates cellular uptake of long-chain free fatty acids.</text>
</comment>
<comment type="catalytic activity">
    <reaction evidence="3">
        <text>L-aspartate + 2-oxoglutarate = oxaloacetate + L-glutamate</text>
        <dbReference type="Rhea" id="RHEA:21824"/>
        <dbReference type="ChEBI" id="CHEBI:16452"/>
        <dbReference type="ChEBI" id="CHEBI:16810"/>
        <dbReference type="ChEBI" id="CHEBI:29985"/>
        <dbReference type="ChEBI" id="CHEBI:29991"/>
        <dbReference type="EC" id="2.6.1.1"/>
    </reaction>
</comment>
<comment type="catalytic activity">
    <reaction evidence="3">
        <text>L-kynurenine + 2-oxoglutarate = kynurenate + L-glutamate + H2O</text>
        <dbReference type="Rhea" id="RHEA:65560"/>
        <dbReference type="ChEBI" id="CHEBI:15377"/>
        <dbReference type="ChEBI" id="CHEBI:16810"/>
        <dbReference type="ChEBI" id="CHEBI:29985"/>
        <dbReference type="ChEBI" id="CHEBI:57959"/>
        <dbReference type="ChEBI" id="CHEBI:58454"/>
        <dbReference type="EC" id="2.6.1.7"/>
    </reaction>
</comment>
<comment type="cofactor">
    <cofactor evidence="1">
        <name>pyridoxal 5'-phosphate</name>
        <dbReference type="ChEBI" id="CHEBI:597326"/>
    </cofactor>
</comment>
<comment type="subunit">
    <text evidence="1">Homodimer.</text>
</comment>
<comment type="subcellular location">
    <subcellularLocation>
        <location evidence="1">Mitochondrion matrix</location>
    </subcellularLocation>
    <subcellularLocation>
        <location evidence="1">Cell membrane</location>
    </subcellularLocation>
</comment>
<comment type="miscellaneous">
    <text>In eukaryotes there are cytoplasmic, mitochondrial and chloroplastic isozymes.</text>
</comment>
<comment type="similarity">
    <text evidence="6">Belongs to the class-I pyridoxal-phosphate-dependent aminotransferase family.</text>
</comment>
<feature type="transit peptide" description="Mitochondrion" evidence="1">
    <location>
        <begin position="1"/>
        <end position="29"/>
    </location>
</feature>
<feature type="chain" id="PRO_0000278665" description="Aspartate aminotransferase, mitochondrial">
    <location>
        <begin position="30"/>
        <end position="430"/>
    </location>
</feature>
<feature type="binding site" evidence="1">
    <location>
        <position position="65"/>
    </location>
    <ligand>
        <name>substrate</name>
    </ligand>
</feature>
<feature type="binding site" evidence="1">
    <location>
        <position position="162"/>
    </location>
    <ligand>
        <name>substrate</name>
    </ligand>
</feature>
<feature type="binding site" evidence="1">
    <location>
        <position position="215"/>
    </location>
    <ligand>
        <name>substrate</name>
    </ligand>
</feature>
<feature type="binding site" evidence="1">
    <location>
        <position position="407"/>
    </location>
    <ligand>
        <name>substrate</name>
    </ligand>
</feature>
<feature type="modified residue" description="Phosphothreonine" evidence="2">
    <location>
        <position position="48"/>
    </location>
</feature>
<feature type="modified residue" description="N6-acetyllysine" evidence="4">
    <location>
        <position position="59"/>
    </location>
</feature>
<feature type="modified residue" description="N6-acetyllysine; alternate" evidence="2">
    <location>
        <position position="73"/>
    </location>
</feature>
<feature type="modified residue" description="N6-succinyllysine; alternate" evidence="4">
    <location>
        <position position="73"/>
    </location>
</feature>
<feature type="modified residue" description="N6-acetyllysine" evidence="4">
    <location>
        <position position="82"/>
    </location>
</feature>
<feature type="modified residue" description="N6-acetyllysine; alternate" evidence="2">
    <location>
        <position position="90"/>
    </location>
</feature>
<feature type="modified residue" description="N6-succinyllysine; alternate" evidence="4">
    <location>
        <position position="90"/>
    </location>
</feature>
<feature type="modified residue" description="3'-nitrotyrosine; alternate" evidence="4">
    <location>
        <position position="96"/>
    </location>
</feature>
<feature type="modified residue" description="Phosphotyrosine; alternate" evidence="2">
    <location>
        <position position="96"/>
    </location>
</feature>
<feature type="modified residue" description="N6-acetyllysine; alternate" evidence="4">
    <location>
        <position position="107"/>
    </location>
</feature>
<feature type="modified residue" description="N6-succinyllysine; alternate" evidence="4">
    <location>
        <position position="107"/>
    </location>
</feature>
<feature type="modified residue" description="N6-acetyllysine; alternate" evidence="4">
    <location>
        <position position="122"/>
    </location>
</feature>
<feature type="modified residue" description="N6-succinyllysine; alternate" evidence="4">
    <location>
        <position position="122"/>
    </location>
</feature>
<feature type="modified residue" description="Phosphoserine" evidence="2">
    <location>
        <position position="143"/>
    </location>
</feature>
<feature type="modified residue" description="N6-acetyllysine; alternate" evidence="2">
    <location>
        <position position="159"/>
    </location>
</feature>
<feature type="modified residue" description="N6-succinyllysine; alternate" evidence="4">
    <location>
        <position position="159"/>
    </location>
</feature>
<feature type="modified residue" description="N6-acetyllysine; alternate" evidence="4">
    <location>
        <position position="185"/>
    </location>
</feature>
<feature type="modified residue" description="N6-succinyllysine; alternate" evidence="4">
    <location>
        <position position="185"/>
    </location>
</feature>
<feature type="modified residue" description="N6-succinyllysine" evidence="4">
    <location>
        <position position="227"/>
    </location>
</feature>
<feature type="modified residue" description="N6-acetyllysine" evidence="2">
    <location>
        <position position="234"/>
    </location>
</feature>
<feature type="modified residue" description="N6-(pyridoxal phosphate)lysine; alternate" evidence="1">
    <location>
        <position position="279"/>
    </location>
</feature>
<feature type="modified residue" description="N6-acetyllysine; alternate" evidence="4">
    <location>
        <position position="279"/>
    </location>
</feature>
<feature type="modified residue" description="N6-acetyllysine; alternate" evidence="2">
    <location>
        <position position="296"/>
    </location>
</feature>
<feature type="modified residue" description="N6-succinyllysine; alternate" evidence="4">
    <location>
        <position position="296"/>
    </location>
</feature>
<feature type="modified residue" description="N6-acetyllysine" evidence="4">
    <location>
        <position position="302"/>
    </location>
</feature>
<feature type="modified residue" description="N6-acetyllysine; alternate" evidence="4">
    <location>
        <position position="309"/>
    </location>
</feature>
<feature type="modified residue" description="N6-succinyllysine; alternate" evidence="5">
    <location>
        <position position="309"/>
    </location>
</feature>
<feature type="modified residue" description="Asymmetric dimethylarginine" evidence="4">
    <location>
        <position position="313"/>
    </location>
</feature>
<feature type="modified residue" description="Phosphothreonine" evidence="2">
    <location>
        <position position="333"/>
    </location>
</feature>
<feature type="modified residue" description="N6-acetyllysine; alternate" evidence="4">
    <location>
        <position position="338"/>
    </location>
</feature>
<feature type="modified residue" description="N6-succinyllysine; alternate" evidence="4">
    <location>
        <position position="338"/>
    </location>
</feature>
<feature type="modified residue" description="N6-acetyllysine" evidence="4">
    <location>
        <position position="345"/>
    </location>
</feature>
<feature type="modified residue" description="N6-acetyllysine; alternate" evidence="4">
    <location>
        <position position="363"/>
    </location>
</feature>
<feature type="modified residue" description="N6-succinyllysine; alternate" evidence="4">
    <location>
        <position position="363"/>
    </location>
</feature>
<feature type="modified residue" description="N6-acetyllysine" evidence="4">
    <location>
        <position position="364"/>
    </location>
</feature>
<feature type="modified residue" description="N6-acetyllysine" evidence="4">
    <location>
        <position position="387"/>
    </location>
</feature>
<feature type="modified residue" description="N6-acetyllysine; alternate" evidence="2">
    <location>
        <position position="396"/>
    </location>
</feature>
<feature type="modified residue" description="N6-succinyllysine; alternate" evidence="4">
    <location>
        <position position="396"/>
    </location>
</feature>
<feature type="modified residue" description="N6-acetyllysine; alternate" evidence="2">
    <location>
        <position position="404"/>
    </location>
</feature>
<feature type="modified residue" description="N6-succinyllysine; alternate" evidence="4">
    <location>
        <position position="404"/>
    </location>
</feature>
<feature type="sequence conflict" description="In Ref. 1; CAH92240." evidence="6" ref="1">
    <original>Q</original>
    <variation>T</variation>
    <location>
        <position position="339"/>
    </location>
</feature>
<sequence length="430" mass="47433">MALLHSGRALPGIAAAFHPGLAAAASARASSWWTHVEMGPPDPILGVTEAFKRDTNSKKMNLGVGAYRDDNGKPYVLPSVRKAEAQIAAKNLDKEYLPIGGLAEFCKASAELALGENSEVLKSGRFVTVQTISGTGALRIGASFLQRFFKFSRDVFLPKPSWGNHTPIFRDAGMQLQGYRYYDPKTCGFDFTGAVEDISKIPEQSVLLLHACAHNPTGVDPRPEQWKEIATVVKKRNLFAFFDMAYQGFASGDGDKDAWAVRHFIEQGINVCLCQSYAKNMGLYGERVGAFTMVCKDADEAKRVESQLKILIRPMYSNPPLNGARIAAAILNTPDLRKQWLQEVKGMADRIIGMRTQLVSNLKKEGSTHNWQHITDQIGMFCFTGLKPEQVERLIKEFSIYMTKDGRISVAGVTSSNVGYLAHAIHQVTK</sequence>
<protein>
    <recommendedName>
        <fullName>Aspartate aminotransferase, mitochondrial</fullName>
        <shortName>mAspAT</shortName>
        <ecNumber evidence="3">2.6.1.1</ecNumber>
        <ecNumber evidence="3">2.6.1.7</ecNumber>
    </recommendedName>
    <alternativeName>
        <fullName>Fatty acid-binding protein</fullName>
        <shortName>FABP-1</shortName>
    </alternativeName>
    <alternativeName>
        <fullName>Glutamate oxaloacetate transaminase 2</fullName>
    </alternativeName>
    <alternativeName>
        <fullName>Kynurenine aminotransferase 4</fullName>
    </alternativeName>
    <alternativeName>
        <fullName>Kynurenine aminotransferase IV</fullName>
    </alternativeName>
    <alternativeName>
        <fullName>Kynurenine--oxoglutarate transaminase 4</fullName>
    </alternativeName>
    <alternativeName>
        <fullName>Kynurenine--oxoglutarate transaminase IV</fullName>
    </alternativeName>
    <alternativeName>
        <fullName>Plasma membrane-associated fatty acid-binding protein</fullName>
        <shortName>FABPpm</shortName>
    </alternativeName>
    <alternativeName>
        <fullName>Transaminase A</fullName>
    </alternativeName>
</protein>
<reference key="1">
    <citation type="submission" date="2004-11" db="EMBL/GenBank/DDBJ databases">
        <authorList>
            <consortium name="The German cDNA consortium"/>
        </authorList>
    </citation>
    <scope>NUCLEOTIDE SEQUENCE [LARGE SCALE MRNA]</scope>
    <source>
        <tissue>Brain cortex</tissue>
        <tissue>Kidney</tissue>
    </source>
</reference>
<evidence type="ECO:0000250" key="1"/>
<evidence type="ECO:0000250" key="2">
    <source>
        <dbReference type="UniProtKB" id="P00505"/>
    </source>
</evidence>
<evidence type="ECO:0000250" key="3">
    <source>
        <dbReference type="UniProtKB" id="P00507"/>
    </source>
</evidence>
<evidence type="ECO:0000250" key="4">
    <source>
        <dbReference type="UniProtKB" id="P05202"/>
    </source>
</evidence>
<evidence type="ECO:0000250" key="5">
    <source>
        <dbReference type="UniProtKB" id="P12344"/>
    </source>
</evidence>
<evidence type="ECO:0000305" key="6"/>
<proteinExistence type="evidence at transcript level"/>
<dbReference type="EC" id="2.6.1.1" evidence="3"/>
<dbReference type="EC" id="2.6.1.7" evidence="3"/>
<dbReference type="EMBL" id="CR857622">
    <property type="protein sequence ID" value="CAH89897.1"/>
    <property type="molecule type" value="mRNA"/>
</dbReference>
<dbReference type="EMBL" id="CR860094">
    <property type="protein sequence ID" value="CAH92240.1"/>
    <property type="molecule type" value="mRNA"/>
</dbReference>
<dbReference type="RefSeq" id="NP_001124888.1">
    <property type="nucleotide sequence ID" value="NM_001131416.1"/>
</dbReference>
<dbReference type="SMR" id="Q5REB0"/>
<dbReference type="FunCoup" id="Q5REB0">
    <property type="interactions" value="1968"/>
</dbReference>
<dbReference type="STRING" id="9601.ENSPPYP00000008377"/>
<dbReference type="Ensembl" id="ENSPPYT00000008719.2">
    <property type="protein sequence ID" value="ENSPPYP00000008378.1"/>
    <property type="gene ID" value="ENSPPYG00000007413.3"/>
</dbReference>
<dbReference type="GeneID" id="100171753"/>
<dbReference type="KEGG" id="pon:100171753"/>
<dbReference type="CTD" id="2806"/>
<dbReference type="eggNOG" id="KOG1411">
    <property type="taxonomic scope" value="Eukaryota"/>
</dbReference>
<dbReference type="GeneTree" id="ENSGT00950000183082"/>
<dbReference type="HOGENOM" id="CLU_032440_1_2_1"/>
<dbReference type="InParanoid" id="Q5REB0"/>
<dbReference type="OMA" id="VGACTIV"/>
<dbReference type="OrthoDB" id="6752799at2759"/>
<dbReference type="TreeFam" id="TF300641"/>
<dbReference type="Proteomes" id="UP000001595">
    <property type="component" value="Chromosome 16"/>
</dbReference>
<dbReference type="GO" id="GO:0005759">
    <property type="term" value="C:mitochondrial matrix"/>
    <property type="evidence" value="ECO:0007669"/>
    <property type="project" value="UniProtKB-SubCell"/>
</dbReference>
<dbReference type="GO" id="GO:0005739">
    <property type="term" value="C:mitochondrion"/>
    <property type="evidence" value="ECO:0000250"/>
    <property type="project" value="UniProtKB"/>
</dbReference>
<dbReference type="GO" id="GO:0005886">
    <property type="term" value="C:plasma membrane"/>
    <property type="evidence" value="ECO:0007669"/>
    <property type="project" value="UniProtKB-SubCell"/>
</dbReference>
<dbReference type="GO" id="GO:0016212">
    <property type="term" value="F:kynurenine-oxoglutarate transaminase activity"/>
    <property type="evidence" value="ECO:0007669"/>
    <property type="project" value="UniProtKB-EC"/>
</dbReference>
<dbReference type="GO" id="GO:0004069">
    <property type="term" value="F:L-aspartate:2-oxoglutarate aminotransferase activity"/>
    <property type="evidence" value="ECO:0000250"/>
    <property type="project" value="UniProtKB"/>
</dbReference>
<dbReference type="GO" id="GO:0030170">
    <property type="term" value="F:pyridoxal phosphate binding"/>
    <property type="evidence" value="ECO:0007669"/>
    <property type="project" value="InterPro"/>
</dbReference>
<dbReference type="GO" id="GO:0006103">
    <property type="term" value="P:2-oxoglutarate metabolic process"/>
    <property type="evidence" value="ECO:0000250"/>
    <property type="project" value="UniProtKB"/>
</dbReference>
<dbReference type="GO" id="GO:0006532">
    <property type="term" value="P:aspartate biosynthetic process"/>
    <property type="evidence" value="ECO:0007669"/>
    <property type="project" value="Ensembl"/>
</dbReference>
<dbReference type="GO" id="GO:0006533">
    <property type="term" value="P:aspartate catabolic process"/>
    <property type="evidence" value="ECO:0007669"/>
    <property type="project" value="Ensembl"/>
</dbReference>
<dbReference type="GO" id="GO:0006531">
    <property type="term" value="P:aspartate metabolic process"/>
    <property type="evidence" value="ECO:0000250"/>
    <property type="project" value="UniProtKB"/>
</dbReference>
<dbReference type="GO" id="GO:0015908">
    <property type="term" value="P:fatty acid transport"/>
    <property type="evidence" value="ECO:0007669"/>
    <property type="project" value="Ensembl"/>
</dbReference>
<dbReference type="GO" id="GO:0019550">
    <property type="term" value="P:glutamate catabolic process to aspartate"/>
    <property type="evidence" value="ECO:0007669"/>
    <property type="project" value="Ensembl"/>
</dbReference>
<dbReference type="GO" id="GO:0006536">
    <property type="term" value="P:glutamate metabolic process"/>
    <property type="evidence" value="ECO:0000250"/>
    <property type="project" value="UniProtKB"/>
</dbReference>
<dbReference type="GO" id="GO:0043490">
    <property type="term" value="P:malate-aspartate shuttle"/>
    <property type="evidence" value="ECO:0007669"/>
    <property type="project" value="Ensembl"/>
</dbReference>
<dbReference type="GO" id="GO:0006107">
    <property type="term" value="P:oxaloacetate metabolic process"/>
    <property type="evidence" value="ECO:0007669"/>
    <property type="project" value="Ensembl"/>
</dbReference>
<dbReference type="GO" id="GO:0045471">
    <property type="term" value="P:response to ethanol"/>
    <property type="evidence" value="ECO:0007669"/>
    <property type="project" value="Ensembl"/>
</dbReference>
<dbReference type="CDD" id="cd00609">
    <property type="entry name" value="AAT_like"/>
    <property type="match status" value="1"/>
</dbReference>
<dbReference type="FunFam" id="3.40.640.10:FF:000026">
    <property type="entry name" value="Aspartate aminotransferase"/>
    <property type="match status" value="1"/>
</dbReference>
<dbReference type="FunFam" id="3.90.1150.10:FF:000001">
    <property type="entry name" value="Aspartate aminotransferase"/>
    <property type="match status" value="1"/>
</dbReference>
<dbReference type="FunFam" id="3.90.1150.10:FF:000160">
    <property type="entry name" value="Similar to aspartate aminotransferase"/>
    <property type="match status" value="1"/>
</dbReference>
<dbReference type="Gene3D" id="3.90.1150.10">
    <property type="entry name" value="Aspartate Aminotransferase, domain 1"/>
    <property type="match status" value="1"/>
</dbReference>
<dbReference type="Gene3D" id="3.40.640.10">
    <property type="entry name" value="Type I PLP-dependent aspartate aminotransferase-like (Major domain)"/>
    <property type="match status" value="1"/>
</dbReference>
<dbReference type="InterPro" id="IPR004839">
    <property type="entry name" value="Aminotransferase_I/II_large"/>
</dbReference>
<dbReference type="InterPro" id="IPR000796">
    <property type="entry name" value="Asp_trans"/>
</dbReference>
<dbReference type="InterPro" id="IPR004838">
    <property type="entry name" value="NHTrfase_class1_PyrdxlP-BS"/>
</dbReference>
<dbReference type="InterPro" id="IPR015424">
    <property type="entry name" value="PyrdxlP-dep_Trfase"/>
</dbReference>
<dbReference type="InterPro" id="IPR015421">
    <property type="entry name" value="PyrdxlP-dep_Trfase_major"/>
</dbReference>
<dbReference type="InterPro" id="IPR015422">
    <property type="entry name" value="PyrdxlP-dep_Trfase_small"/>
</dbReference>
<dbReference type="NCBIfam" id="NF006719">
    <property type="entry name" value="PRK09257.1"/>
    <property type="match status" value="1"/>
</dbReference>
<dbReference type="PANTHER" id="PTHR11879">
    <property type="entry name" value="ASPARTATE AMINOTRANSFERASE"/>
    <property type="match status" value="1"/>
</dbReference>
<dbReference type="PANTHER" id="PTHR11879:SF22">
    <property type="entry name" value="ASPARTATE AMINOTRANSFERASE, MITOCHONDRIAL"/>
    <property type="match status" value="1"/>
</dbReference>
<dbReference type="Pfam" id="PF00155">
    <property type="entry name" value="Aminotran_1_2"/>
    <property type="match status" value="1"/>
</dbReference>
<dbReference type="PRINTS" id="PR00799">
    <property type="entry name" value="TRANSAMINASE"/>
</dbReference>
<dbReference type="SUPFAM" id="SSF53383">
    <property type="entry name" value="PLP-dependent transferases"/>
    <property type="match status" value="1"/>
</dbReference>
<dbReference type="PROSITE" id="PS00105">
    <property type="entry name" value="AA_TRANSFER_CLASS_1"/>
    <property type="match status" value="1"/>
</dbReference>
<organism>
    <name type="scientific">Pongo abelii</name>
    <name type="common">Sumatran orangutan</name>
    <name type="synonym">Pongo pygmaeus abelii</name>
    <dbReference type="NCBI Taxonomy" id="9601"/>
    <lineage>
        <taxon>Eukaryota</taxon>
        <taxon>Metazoa</taxon>
        <taxon>Chordata</taxon>
        <taxon>Craniata</taxon>
        <taxon>Vertebrata</taxon>
        <taxon>Euteleostomi</taxon>
        <taxon>Mammalia</taxon>
        <taxon>Eutheria</taxon>
        <taxon>Euarchontoglires</taxon>
        <taxon>Primates</taxon>
        <taxon>Haplorrhini</taxon>
        <taxon>Catarrhini</taxon>
        <taxon>Hominidae</taxon>
        <taxon>Pongo</taxon>
    </lineage>
</organism>
<accession>Q5REB0</accession>
<accession>Q5R7M0</accession>